<name>ORTH4_ARATH</name>
<comment type="function">
    <text evidence="1">E3 ubiquitin-protein ligase. May participate in CpG methylation-dependent transcriptional regulation (By similarity).</text>
</comment>
<comment type="catalytic activity">
    <reaction>
        <text>S-ubiquitinyl-[E2 ubiquitin-conjugating enzyme]-L-cysteine + [acceptor protein]-L-lysine = [E2 ubiquitin-conjugating enzyme]-L-cysteine + N(6)-ubiquitinyl-[acceptor protein]-L-lysine.</text>
        <dbReference type="EC" id="2.3.2.27"/>
    </reaction>
</comment>
<comment type="pathway">
    <text>Protein modification; protein ubiquitination.</text>
</comment>
<comment type="subcellular location">
    <subcellularLocation>
        <location evidence="4">Nucleus</location>
    </subcellularLocation>
</comment>
<comment type="domain">
    <text evidence="1">The RING fingers are required for ubiquitin ligase activity.</text>
</comment>
<comment type="domain">
    <text evidence="1">The YDG domain mediates the interaction with histone H3.</text>
</comment>
<accession>Q9C8E1</accession>
<dbReference type="EC" id="2.3.2.27"/>
<dbReference type="EMBL" id="AC026480">
    <property type="protein sequence ID" value="AAG51294.1"/>
    <property type="molecule type" value="Genomic_DNA"/>
</dbReference>
<dbReference type="EMBL" id="CP002684">
    <property type="protein sequence ID" value="AEE34454.1"/>
    <property type="molecule type" value="Genomic_DNA"/>
</dbReference>
<dbReference type="PIR" id="H96684">
    <property type="entry name" value="H96684"/>
</dbReference>
<dbReference type="RefSeq" id="NP_176778.1">
    <property type="nucleotide sequence ID" value="NM_105275.2"/>
</dbReference>
<dbReference type="SMR" id="Q9C8E1"/>
<dbReference type="FunCoup" id="Q9C8E1">
    <property type="interactions" value="1747"/>
</dbReference>
<dbReference type="STRING" id="3702.Q9C8E1"/>
<dbReference type="iPTMnet" id="Q9C8E1"/>
<dbReference type="PaxDb" id="3702-AT1G66040.1"/>
<dbReference type="EnsemblPlants" id="AT1G66040.1">
    <property type="protein sequence ID" value="AT1G66040.1"/>
    <property type="gene ID" value="AT1G66040"/>
</dbReference>
<dbReference type="GeneID" id="842917"/>
<dbReference type="Gramene" id="AT1G66040.1">
    <property type="protein sequence ID" value="AT1G66040.1"/>
    <property type="gene ID" value="AT1G66040"/>
</dbReference>
<dbReference type="KEGG" id="ath:AT1G66040"/>
<dbReference type="Araport" id="AT1G66040"/>
<dbReference type="TAIR" id="AT1G66040">
    <property type="gene designation" value="VIM4"/>
</dbReference>
<dbReference type="eggNOG" id="ENOG502QRDQ">
    <property type="taxonomic scope" value="Eukaryota"/>
</dbReference>
<dbReference type="HOGENOM" id="CLU_016281_0_0_1"/>
<dbReference type="InParanoid" id="Q9C8E1"/>
<dbReference type="OMA" id="HYVTYKR"/>
<dbReference type="PhylomeDB" id="Q9C8E1"/>
<dbReference type="UniPathway" id="UPA00143"/>
<dbReference type="PRO" id="PR:Q9C8E1"/>
<dbReference type="Proteomes" id="UP000006548">
    <property type="component" value="Chromosome 1"/>
</dbReference>
<dbReference type="ExpressionAtlas" id="Q9C8E1">
    <property type="expression patterns" value="baseline and differential"/>
</dbReference>
<dbReference type="GO" id="GO:0005634">
    <property type="term" value="C:nucleus"/>
    <property type="evidence" value="ECO:0000250"/>
    <property type="project" value="UniProtKB"/>
</dbReference>
<dbReference type="GO" id="GO:0042393">
    <property type="term" value="F:histone binding"/>
    <property type="evidence" value="ECO:0000250"/>
    <property type="project" value="UniProtKB"/>
</dbReference>
<dbReference type="GO" id="GO:0008327">
    <property type="term" value="F:methyl-CpG binding"/>
    <property type="evidence" value="ECO:0000250"/>
    <property type="project" value="UniProtKB"/>
</dbReference>
<dbReference type="GO" id="GO:0010428">
    <property type="term" value="F:methyl-CpNpG binding"/>
    <property type="evidence" value="ECO:0000250"/>
    <property type="project" value="UniProtKB"/>
</dbReference>
<dbReference type="GO" id="GO:0010429">
    <property type="term" value="F:methyl-CpNpN binding"/>
    <property type="evidence" value="ECO:0000250"/>
    <property type="project" value="UniProtKB"/>
</dbReference>
<dbReference type="GO" id="GO:0004842">
    <property type="term" value="F:ubiquitin-protein transferase activity"/>
    <property type="evidence" value="ECO:0000250"/>
    <property type="project" value="UniProtKB"/>
</dbReference>
<dbReference type="GO" id="GO:0008270">
    <property type="term" value="F:zinc ion binding"/>
    <property type="evidence" value="ECO:0007669"/>
    <property type="project" value="UniProtKB-KW"/>
</dbReference>
<dbReference type="GO" id="GO:0006325">
    <property type="term" value="P:chromatin organization"/>
    <property type="evidence" value="ECO:0007669"/>
    <property type="project" value="UniProtKB-KW"/>
</dbReference>
<dbReference type="GO" id="GO:0016567">
    <property type="term" value="P:protein ubiquitination"/>
    <property type="evidence" value="ECO:0000250"/>
    <property type="project" value="UniProtKB"/>
</dbReference>
<dbReference type="CDD" id="cd23138">
    <property type="entry name" value="RING-HC_ORTHRUS_rpt1"/>
    <property type="match status" value="1"/>
</dbReference>
<dbReference type="CDD" id="cd23139">
    <property type="entry name" value="RING-HC_ORTHRUS_rpt2"/>
    <property type="match status" value="1"/>
</dbReference>
<dbReference type="FunFam" id="2.30.280.10:FF:000002">
    <property type="entry name" value="E3 ubiquitin-protein ligase ORTHRUS 2"/>
    <property type="match status" value="1"/>
</dbReference>
<dbReference type="FunFam" id="3.30.40.10:FF:001023">
    <property type="entry name" value="E3 ubiquitin-protein ligase ORTHRUS 2"/>
    <property type="match status" value="1"/>
</dbReference>
<dbReference type="FunFam" id="3.30.40.10:FF:000737">
    <property type="entry name" value="E3 ubiquitin-protein ligase ORTHRUS 3"/>
    <property type="match status" value="1"/>
</dbReference>
<dbReference type="Gene3D" id="2.30.280.10">
    <property type="entry name" value="SRA-YDG"/>
    <property type="match status" value="1"/>
</dbReference>
<dbReference type="Gene3D" id="3.30.40.10">
    <property type="entry name" value="Zinc/RING finger domain, C3HC4 (zinc finger)"/>
    <property type="match status" value="3"/>
</dbReference>
<dbReference type="InterPro" id="IPR015947">
    <property type="entry name" value="PUA-like_sf"/>
</dbReference>
<dbReference type="InterPro" id="IPR047498">
    <property type="entry name" value="RING-HC_ORTHRUS_rpt1"/>
</dbReference>
<dbReference type="InterPro" id="IPR047529">
    <property type="entry name" value="RING-HC_ORTHRUS_rpt2"/>
</dbReference>
<dbReference type="InterPro" id="IPR036987">
    <property type="entry name" value="SRA-YDG_sf"/>
</dbReference>
<dbReference type="InterPro" id="IPR003105">
    <property type="entry name" value="SRA_YDG"/>
</dbReference>
<dbReference type="InterPro" id="IPR045134">
    <property type="entry name" value="UHRF1/2-like"/>
</dbReference>
<dbReference type="InterPro" id="IPR019786">
    <property type="entry name" value="Zinc_finger_PHD-type_CS"/>
</dbReference>
<dbReference type="InterPro" id="IPR027370">
    <property type="entry name" value="Znf-RING_euk"/>
</dbReference>
<dbReference type="InterPro" id="IPR011011">
    <property type="entry name" value="Znf_FYVE_PHD"/>
</dbReference>
<dbReference type="InterPro" id="IPR001965">
    <property type="entry name" value="Znf_PHD"/>
</dbReference>
<dbReference type="InterPro" id="IPR001841">
    <property type="entry name" value="Znf_RING"/>
</dbReference>
<dbReference type="InterPro" id="IPR013083">
    <property type="entry name" value="Znf_RING/FYVE/PHD"/>
</dbReference>
<dbReference type="InterPro" id="IPR017907">
    <property type="entry name" value="Znf_RING_CS"/>
</dbReference>
<dbReference type="PANTHER" id="PTHR14140:SF46">
    <property type="entry name" value="E3 UBIQUITIN-PROTEIN LIGASE ORTHRUS 1-RELATED"/>
    <property type="match status" value="1"/>
</dbReference>
<dbReference type="PANTHER" id="PTHR14140">
    <property type="entry name" value="E3 UBIQUITIN-PROTEIN LIGASE UHRF-RELATED"/>
    <property type="match status" value="1"/>
</dbReference>
<dbReference type="Pfam" id="PF02182">
    <property type="entry name" value="SAD_SRA"/>
    <property type="match status" value="1"/>
</dbReference>
<dbReference type="Pfam" id="PF13920">
    <property type="entry name" value="zf-C3HC4_3"/>
    <property type="match status" value="1"/>
</dbReference>
<dbReference type="Pfam" id="PF13445">
    <property type="entry name" value="zf-RING_UBOX"/>
    <property type="match status" value="1"/>
</dbReference>
<dbReference type="SMART" id="SM00249">
    <property type="entry name" value="PHD"/>
    <property type="match status" value="1"/>
</dbReference>
<dbReference type="SMART" id="SM00184">
    <property type="entry name" value="RING"/>
    <property type="match status" value="2"/>
</dbReference>
<dbReference type="SMART" id="SM00466">
    <property type="entry name" value="SRA"/>
    <property type="match status" value="1"/>
</dbReference>
<dbReference type="SUPFAM" id="SSF57903">
    <property type="entry name" value="FYVE/PHD zinc finger"/>
    <property type="match status" value="1"/>
</dbReference>
<dbReference type="SUPFAM" id="SSF88697">
    <property type="entry name" value="PUA domain-like"/>
    <property type="match status" value="1"/>
</dbReference>
<dbReference type="SUPFAM" id="SSF57850">
    <property type="entry name" value="RING/U-box"/>
    <property type="match status" value="2"/>
</dbReference>
<dbReference type="PROSITE" id="PS51015">
    <property type="entry name" value="YDG"/>
    <property type="match status" value="1"/>
</dbReference>
<dbReference type="PROSITE" id="PS01359">
    <property type="entry name" value="ZF_PHD_1"/>
    <property type="match status" value="1"/>
</dbReference>
<dbReference type="PROSITE" id="PS00518">
    <property type="entry name" value="ZF_RING_1"/>
    <property type="match status" value="1"/>
</dbReference>
<dbReference type="PROSITE" id="PS50089">
    <property type="entry name" value="ZF_RING_2"/>
    <property type="match status" value="2"/>
</dbReference>
<proteinExistence type="inferred from homology"/>
<keyword id="KW-0156">Chromatin regulator</keyword>
<keyword id="KW-0175">Coiled coil</keyword>
<keyword id="KW-0238">DNA-binding</keyword>
<keyword id="KW-0479">Metal-binding</keyword>
<keyword id="KW-0539">Nucleus</keyword>
<keyword id="KW-1185">Reference proteome</keyword>
<keyword id="KW-0677">Repeat</keyword>
<keyword id="KW-0808">Transferase</keyword>
<keyword id="KW-0833">Ubl conjugation pathway</keyword>
<keyword id="KW-0862">Zinc</keyword>
<keyword id="KW-0863">Zinc-finger</keyword>
<organism>
    <name type="scientific">Arabidopsis thaliana</name>
    <name type="common">Mouse-ear cress</name>
    <dbReference type="NCBI Taxonomy" id="3702"/>
    <lineage>
        <taxon>Eukaryota</taxon>
        <taxon>Viridiplantae</taxon>
        <taxon>Streptophyta</taxon>
        <taxon>Embryophyta</taxon>
        <taxon>Tracheophyta</taxon>
        <taxon>Spermatophyta</taxon>
        <taxon>Magnoliopsida</taxon>
        <taxon>eudicotyledons</taxon>
        <taxon>Gunneridae</taxon>
        <taxon>Pentapetalae</taxon>
        <taxon>rosids</taxon>
        <taxon>malvids</taxon>
        <taxon>Brassicales</taxon>
        <taxon>Brassicaceae</taxon>
        <taxon>Camelineae</taxon>
        <taxon>Arabidopsis</taxon>
    </lineage>
</organism>
<feature type="chain" id="PRO_0000396828" description="Putative E3 ubiquitin-protein ligase ORTHRUS 4">
    <location>
        <begin position="1"/>
        <end position="622"/>
    </location>
</feature>
<feature type="domain" description="YDG" evidence="4">
    <location>
        <begin position="258"/>
        <end position="407"/>
    </location>
</feature>
<feature type="zinc finger region" description="PHD-type">
    <location>
        <begin position="12"/>
        <end position="62"/>
    </location>
</feature>
<feature type="zinc finger region" description="RING-type 1" evidence="3">
    <location>
        <begin position="129"/>
        <end position="169"/>
    </location>
</feature>
<feature type="zinc finger region" description="RING-type 2" evidence="3">
    <location>
        <begin position="498"/>
        <end position="555"/>
    </location>
</feature>
<feature type="region of interest" description="Disordered" evidence="5">
    <location>
        <begin position="579"/>
        <end position="622"/>
    </location>
</feature>
<feature type="coiled-coil region" evidence="2">
    <location>
        <begin position="566"/>
        <end position="602"/>
    </location>
</feature>
<feature type="compositionally biased region" description="Polar residues" evidence="5">
    <location>
        <begin position="611"/>
        <end position="622"/>
    </location>
</feature>
<reference key="1">
    <citation type="journal article" date="2000" name="Nature">
        <title>Sequence and analysis of chromosome 1 of the plant Arabidopsis thaliana.</title>
        <authorList>
            <person name="Theologis A."/>
            <person name="Ecker J.R."/>
            <person name="Palm C.J."/>
            <person name="Federspiel N.A."/>
            <person name="Kaul S."/>
            <person name="White O."/>
            <person name="Alonso J."/>
            <person name="Altafi H."/>
            <person name="Araujo R."/>
            <person name="Bowman C.L."/>
            <person name="Brooks S.Y."/>
            <person name="Buehler E."/>
            <person name="Chan A."/>
            <person name="Chao Q."/>
            <person name="Chen H."/>
            <person name="Cheuk R.F."/>
            <person name="Chin C.W."/>
            <person name="Chung M.K."/>
            <person name="Conn L."/>
            <person name="Conway A.B."/>
            <person name="Conway A.R."/>
            <person name="Creasy T.H."/>
            <person name="Dewar K."/>
            <person name="Dunn P."/>
            <person name="Etgu P."/>
            <person name="Feldblyum T.V."/>
            <person name="Feng J.-D."/>
            <person name="Fong B."/>
            <person name="Fujii C.Y."/>
            <person name="Gill J.E."/>
            <person name="Goldsmith A.D."/>
            <person name="Haas B."/>
            <person name="Hansen N.F."/>
            <person name="Hughes B."/>
            <person name="Huizar L."/>
            <person name="Hunter J.L."/>
            <person name="Jenkins J."/>
            <person name="Johnson-Hopson C."/>
            <person name="Khan S."/>
            <person name="Khaykin E."/>
            <person name="Kim C.J."/>
            <person name="Koo H.L."/>
            <person name="Kremenetskaia I."/>
            <person name="Kurtz D.B."/>
            <person name="Kwan A."/>
            <person name="Lam B."/>
            <person name="Langin-Hooper S."/>
            <person name="Lee A."/>
            <person name="Lee J.M."/>
            <person name="Lenz C.A."/>
            <person name="Li J.H."/>
            <person name="Li Y.-P."/>
            <person name="Lin X."/>
            <person name="Liu S.X."/>
            <person name="Liu Z.A."/>
            <person name="Luros J.S."/>
            <person name="Maiti R."/>
            <person name="Marziali A."/>
            <person name="Militscher J."/>
            <person name="Miranda M."/>
            <person name="Nguyen M."/>
            <person name="Nierman W.C."/>
            <person name="Osborne B.I."/>
            <person name="Pai G."/>
            <person name="Peterson J."/>
            <person name="Pham P.K."/>
            <person name="Rizzo M."/>
            <person name="Rooney T."/>
            <person name="Rowley D."/>
            <person name="Sakano H."/>
            <person name="Salzberg S.L."/>
            <person name="Schwartz J.R."/>
            <person name="Shinn P."/>
            <person name="Southwick A.M."/>
            <person name="Sun H."/>
            <person name="Tallon L.J."/>
            <person name="Tambunga G."/>
            <person name="Toriumi M.J."/>
            <person name="Town C.D."/>
            <person name="Utterback T."/>
            <person name="Van Aken S."/>
            <person name="Vaysberg M."/>
            <person name="Vysotskaia V.S."/>
            <person name="Walker M."/>
            <person name="Wu D."/>
            <person name="Yu G."/>
            <person name="Fraser C.M."/>
            <person name="Venter J.C."/>
            <person name="Davis R.W."/>
        </authorList>
    </citation>
    <scope>NUCLEOTIDE SEQUENCE [LARGE SCALE GENOMIC DNA]</scope>
    <source>
        <strain>cv. Columbia</strain>
    </source>
</reference>
<reference key="2">
    <citation type="journal article" date="2017" name="Plant J.">
        <title>Araport11: a complete reannotation of the Arabidopsis thaliana reference genome.</title>
        <authorList>
            <person name="Cheng C.Y."/>
            <person name="Krishnakumar V."/>
            <person name="Chan A.P."/>
            <person name="Thibaud-Nissen F."/>
            <person name="Schobel S."/>
            <person name="Town C.D."/>
        </authorList>
    </citation>
    <scope>GENOME REANNOTATION</scope>
    <source>
        <strain>cv. Columbia</strain>
    </source>
</reference>
<reference key="3">
    <citation type="journal article" date="2002" name="Genome Biol.">
        <title>Evaluation and classification of RING-finger domains encoded by the Arabidopsis genome.</title>
        <authorList>
            <person name="Kosarev P."/>
            <person name="Mayer K.F.X."/>
            <person name="Hardtke C.S."/>
        </authorList>
    </citation>
    <scope>GENE FAMILY ORGANIZATION</scope>
</reference>
<reference key="4">
    <citation type="journal article" date="2008" name="Plant J.">
        <title>ORTH/VIM proteins that regulate DNA methylation are functional ubiquitin E3 ligases.</title>
        <authorList>
            <person name="Kraft E."/>
            <person name="Bostick M."/>
            <person name="Jacobsen S.E."/>
            <person name="Callis J."/>
        </authorList>
    </citation>
    <scope>GENE FAMILY</scope>
    <scope>NOMENCLATURE</scope>
</reference>
<gene>
    <name type="primary">ORTH4</name>
    <name type="synonym">VIM4</name>
    <name type="ordered locus">At1g66040</name>
    <name type="ORF">F15E12.8</name>
</gene>
<protein>
    <recommendedName>
        <fullName>Putative E3 ubiquitin-protein ligase ORTHRUS 4</fullName>
        <ecNumber>2.3.2.27</ecNumber>
    </recommendedName>
    <alternativeName>
        <fullName>Protein VARIANT IN METHYLATION 4</fullName>
    </alternativeName>
    <alternativeName>
        <fullName evidence="6">RING-type E3 ubiquitin transferase ORTHRUS 4</fullName>
    </alternativeName>
</protein>
<sequence length="622" mass="68663">MAIQTQLPCDGDGVCMRCQVTPPSEETLTCGTCVTPWHVSCLLPESLASSTGDWECPDCSGVVVPSAAPGTGISGPESSGSVLVAAIRAIQADVTLTEAEKAKKRQRLMSGGGDDGVDDEEKKKLEIFCSICIQLPERPVTTPCGHNFCLKCFEKWAVGQGKLTCMICRSKIPRHVAKNPRINLALVSAIRLANVTKCSGEATAAKVHHIIRNQDRPDKAFTTERAVKTGKANAASGKFFVTIPRDHFGPIPAANDVTRNQGVLVGESWEDRQECRQWGVHFPHVAGIAGQAAVGAQSVALSGGYDDDEDHGEWFLYTGSGGRDLSGNKRVNKIQSSDQAFKNMNEALRLSCKMGYPVRVVRSWKEKRSAYAPAEGVRYDGVYRIEKCWSNVGVQGLHKMCRYLFVRCDNEPAPWTSDEHGDRPRPLPDVPELENATDLFVRKESPSWGFDEAEGRWKWMKSPPVSRMALDTEERKKNKRAKKGNNAMKARLLKEFSCQICRKVLSLPVTTPCAHNFCKACLEAKFAGITQLRDRSNGVRKLRAKKNIMTCPCCTTDLSEFLQNPQVNREMMEIIENFKKSEEEAEVAESSNISEEEEEESEPPTKKIKMDNNSVGDTSLSA</sequence>
<evidence type="ECO:0000250" key="1"/>
<evidence type="ECO:0000255" key="2"/>
<evidence type="ECO:0000255" key="3">
    <source>
        <dbReference type="PROSITE-ProRule" id="PRU00175"/>
    </source>
</evidence>
<evidence type="ECO:0000255" key="4">
    <source>
        <dbReference type="PROSITE-ProRule" id="PRU00358"/>
    </source>
</evidence>
<evidence type="ECO:0000256" key="5">
    <source>
        <dbReference type="SAM" id="MobiDB-lite"/>
    </source>
</evidence>
<evidence type="ECO:0000305" key="6"/>